<protein>
    <recommendedName>
        <fullName>Probable 4-hydroxyphenylpyruvate dioxygenase 2</fullName>
        <shortName>4HPPD 2</shortName>
        <shortName>HPD 2</shortName>
        <shortName>HPPDase 2</shortName>
        <ecNumber>1.13.11.27</ecNumber>
    </recommendedName>
</protein>
<organism>
    <name type="scientific">Aspergillus fumigatus (strain ATCC MYA-4609 / CBS 101355 / FGSC A1100 / Af293)</name>
    <name type="common">Neosartorya fumigata</name>
    <dbReference type="NCBI Taxonomy" id="330879"/>
    <lineage>
        <taxon>Eukaryota</taxon>
        <taxon>Fungi</taxon>
        <taxon>Dikarya</taxon>
        <taxon>Ascomycota</taxon>
        <taxon>Pezizomycotina</taxon>
        <taxon>Eurotiomycetes</taxon>
        <taxon>Eurotiomycetidae</taxon>
        <taxon>Eurotiales</taxon>
        <taxon>Aspergillaceae</taxon>
        <taxon>Aspergillus</taxon>
        <taxon>Aspergillus subgen. Fumigati</taxon>
    </lineage>
</organism>
<sequence length="406" mass="45776">MTVSKKVEENIFASKLGPEYVGFDHITWYVGNAKQAASYYVTRMGFKQIAYRGPETGSRSVVSHVISNGQAIFVLTSPIRSMAGTGAYDDDPDVTKADRRLLEEIHNHLIKHGDGVKDVAFRIEGDIEAVWKRAVDHGAAPVAAPTTLKDDRHGSITLATIGTYEDTVHSLINRHDYSGPFLPGYEVVTDDDPINRLLPSIDFIEIDHCVGNQPWNGVDPIVKYYEDCLNFHRYWTVDDLNMCGEYSAMRSIVVASPNEVIKMPMNEPAQGKKKSQIEEFVNYYNGAGVQHIAFRTHDIVTAVTRLRERGVSFLEVPSAYYSDLRQRLSHTGLTLEEDIAVLEKLHILVDFDEKGYLLQIFSKHVLDRPTVFIEVIQRNNFDGFGAGNFKSLFEAFEREQARRGNL</sequence>
<accession>Q4WPV8</accession>
<dbReference type="EC" id="1.13.11.27"/>
<dbReference type="EMBL" id="AAHF01000005">
    <property type="protein sequence ID" value="EAL89726.1"/>
    <property type="molecule type" value="Genomic_DNA"/>
</dbReference>
<dbReference type="RefSeq" id="XP_751764.1">
    <property type="nucleotide sequence ID" value="XM_746671.1"/>
</dbReference>
<dbReference type="SMR" id="Q4WPV8"/>
<dbReference type="STRING" id="330879.Q4WPV8"/>
<dbReference type="EnsemblFungi" id="EAL89726">
    <property type="protein sequence ID" value="EAL89726"/>
    <property type="gene ID" value="AFUA_4G10620"/>
</dbReference>
<dbReference type="GeneID" id="3509500"/>
<dbReference type="KEGG" id="afm:AFUA_4G10620"/>
<dbReference type="VEuPathDB" id="FungiDB:Afu4g10620"/>
<dbReference type="eggNOG" id="KOG0638">
    <property type="taxonomic scope" value="Eukaryota"/>
</dbReference>
<dbReference type="HOGENOM" id="CLU_034004_3_1_1"/>
<dbReference type="InParanoid" id="Q4WPV8"/>
<dbReference type="OMA" id="DMCSEYS"/>
<dbReference type="OrthoDB" id="414569at2759"/>
<dbReference type="UniPathway" id="UPA00139">
    <property type="reaction ID" value="UER00362"/>
</dbReference>
<dbReference type="Proteomes" id="UP000002530">
    <property type="component" value="Chromosome 4"/>
</dbReference>
<dbReference type="GO" id="GO:0003868">
    <property type="term" value="F:4-hydroxyphenylpyruvate dioxygenase activity"/>
    <property type="evidence" value="ECO:0000318"/>
    <property type="project" value="GO_Central"/>
</dbReference>
<dbReference type="GO" id="GO:0046872">
    <property type="term" value="F:metal ion binding"/>
    <property type="evidence" value="ECO:0007669"/>
    <property type="project" value="UniProtKB-KW"/>
</dbReference>
<dbReference type="GO" id="GO:0006559">
    <property type="term" value="P:L-phenylalanine catabolic process"/>
    <property type="evidence" value="ECO:0007669"/>
    <property type="project" value="UniProtKB-UniPathway"/>
</dbReference>
<dbReference type="GO" id="GO:0006572">
    <property type="term" value="P:tyrosine catabolic process"/>
    <property type="evidence" value="ECO:0000318"/>
    <property type="project" value="GO_Central"/>
</dbReference>
<dbReference type="CDD" id="cd07250">
    <property type="entry name" value="HPPD_C_like"/>
    <property type="match status" value="1"/>
</dbReference>
<dbReference type="CDD" id="cd08342">
    <property type="entry name" value="HPPD_N_like"/>
    <property type="match status" value="1"/>
</dbReference>
<dbReference type="FunFam" id="3.10.180.10:FF:000001">
    <property type="entry name" value="4-hydroxyphenylpyruvate dioxygenase"/>
    <property type="match status" value="1"/>
</dbReference>
<dbReference type="FunFam" id="3.10.180.10:FF:000020">
    <property type="entry name" value="4-hydroxyphenylpyruvate dioxygenase"/>
    <property type="match status" value="1"/>
</dbReference>
<dbReference type="Gene3D" id="3.10.180.10">
    <property type="entry name" value="2,3-Dihydroxybiphenyl 1,2-Dioxygenase, domain 1"/>
    <property type="match status" value="2"/>
</dbReference>
<dbReference type="InterPro" id="IPR005956">
    <property type="entry name" value="4OHPhenylPyrv_dOase"/>
</dbReference>
<dbReference type="InterPro" id="IPR041735">
    <property type="entry name" value="4OHPhenylPyrv_dOase_C"/>
</dbReference>
<dbReference type="InterPro" id="IPR041736">
    <property type="entry name" value="4OHPhenylPyrv_dOase_N"/>
</dbReference>
<dbReference type="InterPro" id="IPR029068">
    <property type="entry name" value="Glyas_Bleomycin-R_OHBP_Dase"/>
</dbReference>
<dbReference type="InterPro" id="IPR004360">
    <property type="entry name" value="Glyas_Fos-R_dOase_dom"/>
</dbReference>
<dbReference type="InterPro" id="IPR037523">
    <property type="entry name" value="VOC"/>
</dbReference>
<dbReference type="NCBIfam" id="TIGR01263">
    <property type="entry name" value="4HPPD"/>
    <property type="match status" value="1"/>
</dbReference>
<dbReference type="PANTHER" id="PTHR11959">
    <property type="entry name" value="4-HYDROXYPHENYLPYRUVATE DIOXYGENASE"/>
    <property type="match status" value="1"/>
</dbReference>
<dbReference type="PANTHER" id="PTHR11959:SF1">
    <property type="entry name" value="4-HYDROXYPHENYLPYRUVATE DIOXYGENASE"/>
    <property type="match status" value="1"/>
</dbReference>
<dbReference type="Pfam" id="PF00903">
    <property type="entry name" value="Glyoxalase"/>
    <property type="match status" value="1"/>
</dbReference>
<dbReference type="PIRSF" id="PIRSF009283">
    <property type="entry name" value="HPP_dOase"/>
    <property type="match status" value="1"/>
</dbReference>
<dbReference type="SUPFAM" id="SSF54593">
    <property type="entry name" value="Glyoxalase/Bleomycin resistance protein/Dihydroxybiphenyl dioxygenase"/>
    <property type="match status" value="1"/>
</dbReference>
<dbReference type="PROSITE" id="PS51819">
    <property type="entry name" value="VOC"/>
    <property type="match status" value="2"/>
</dbReference>
<name>HPPD2_ASPFU</name>
<proteinExistence type="inferred from homology"/>
<evidence type="ECO:0000250" key="1"/>
<evidence type="ECO:0000255" key="2">
    <source>
        <dbReference type="PROSITE-ProRule" id="PRU01163"/>
    </source>
</evidence>
<evidence type="ECO:0000305" key="3"/>
<keyword id="KW-0223">Dioxygenase</keyword>
<keyword id="KW-0408">Iron</keyword>
<keyword id="KW-0479">Metal-binding</keyword>
<keyword id="KW-0560">Oxidoreductase</keyword>
<keyword id="KW-0585">Phenylalanine catabolism</keyword>
<keyword id="KW-1185">Reference proteome</keyword>
<keyword id="KW-0677">Repeat</keyword>
<keyword id="KW-0828">Tyrosine catabolism</keyword>
<feature type="chain" id="PRO_0000088402" description="Probable 4-hydroxyphenylpyruvate dioxygenase 2">
    <location>
        <begin position="1"/>
        <end position="406"/>
    </location>
</feature>
<feature type="domain" description="VOC 1" evidence="2">
    <location>
        <begin position="22"/>
        <end position="174"/>
    </location>
</feature>
<feature type="domain" description="VOC 2" evidence="2">
    <location>
        <begin position="205"/>
        <end position="363"/>
    </location>
</feature>
<feature type="binding site" evidence="1">
    <location>
        <position position="208"/>
    </location>
    <ligand>
        <name>Fe cation</name>
        <dbReference type="ChEBI" id="CHEBI:24875"/>
    </ligand>
</feature>
<feature type="binding site" evidence="1">
    <location>
        <position position="291"/>
    </location>
    <ligand>
        <name>Fe cation</name>
        <dbReference type="ChEBI" id="CHEBI:24875"/>
    </ligand>
</feature>
<feature type="binding site" evidence="1">
    <location>
        <position position="374"/>
    </location>
    <ligand>
        <name>Fe cation</name>
        <dbReference type="ChEBI" id="CHEBI:24875"/>
    </ligand>
</feature>
<reference key="1">
    <citation type="journal article" date="2005" name="Nature">
        <title>Genomic sequence of the pathogenic and allergenic filamentous fungus Aspergillus fumigatus.</title>
        <authorList>
            <person name="Nierman W.C."/>
            <person name="Pain A."/>
            <person name="Anderson M.J."/>
            <person name="Wortman J.R."/>
            <person name="Kim H.S."/>
            <person name="Arroyo J."/>
            <person name="Berriman M."/>
            <person name="Abe K."/>
            <person name="Archer D.B."/>
            <person name="Bermejo C."/>
            <person name="Bennett J.W."/>
            <person name="Bowyer P."/>
            <person name="Chen D."/>
            <person name="Collins M."/>
            <person name="Coulsen R."/>
            <person name="Davies R."/>
            <person name="Dyer P.S."/>
            <person name="Farman M.L."/>
            <person name="Fedorova N."/>
            <person name="Fedorova N.D."/>
            <person name="Feldblyum T.V."/>
            <person name="Fischer R."/>
            <person name="Fosker N."/>
            <person name="Fraser A."/>
            <person name="Garcia J.L."/>
            <person name="Garcia M.J."/>
            <person name="Goble A."/>
            <person name="Goldman G.H."/>
            <person name="Gomi K."/>
            <person name="Griffith-Jones S."/>
            <person name="Gwilliam R."/>
            <person name="Haas B.J."/>
            <person name="Haas H."/>
            <person name="Harris D.E."/>
            <person name="Horiuchi H."/>
            <person name="Huang J."/>
            <person name="Humphray S."/>
            <person name="Jimenez J."/>
            <person name="Keller N."/>
            <person name="Khouri H."/>
            <person name="Kitamoto K."/>
            <person name="Kobayashi T."/>
            <person name="Konzack S."/>
            <person name="Kulkarni R."/>
            <person name="Kumagai T."/>
            <person name="Lafton A."/>
            <person name="Latge J.-P."/>
            <person name="Li W."/>
            <person name="Lord A."/>
            <person name="Lu C."/>
            <person name="Majoros W.H."/>
            <person name="May G.S."/>
            <person name="Miller B.L."/>
            <person name="Mohamoud Y."/>
            <person name="Molina M."/>
            <person name="Monod M."/>
            <person name="Mouyna I."/>
            <person name="Mulligan S."/>
            <person name="Murphy L.D."/>
            <person name="O'Neil S."/>
            <person name="Paulsen I."/>
            <person name="Penalva M.A."/>
            <person name="Pertea M."/>
            <person name="Price C."/>
            <person name="Pritchard B.L."/>
            <person name="Quail M.A."/>
            <person name="Rabbinowitsch E."/>
            <person name="Rawlins N."/>
            <person name="Rajandream M.A."/>
            <person name="Reichard U."/>
            <person name="Renauld H."/>
            <person name="Robson G.D."/>
            <person name="Rodriguez de Cordoba S."/>
            <person name="Rodriguez-Pena J.M."/>
            <person name="Ronning C.M."/>
            <person name="Rutter S."/>
            <person name="Salzberg S.L."/>
            <person name="Sanchez M."/>
            <person name="Sanchez-Ferrero J.C."/>
            <person name="Saunders D."/>
            <person name="Seeger K."/>
            <person name="Squares R."/>
            <person name="Squares S."/>
            <person name="Takeuchi M."/>
            <person name="Tekaia F."/>
            <person name="Turner G."/>
            <person name="Vazquez de Aldana C.R."/>
            <person name="Weidman J."/>
            <person name="White O."/>
            <person name="Woodward J.R."/>
            <person name="Yu J.-H."/>
            <person name="Fraser C.M."/>
            <person name="Galagan J.E."/>
            <person name="Asai K."/>
            <person name="Machida M."/>
            <person name="Hall N."/>
            <person name="Barrell B.G."/>
            <person name="Denning D.W."/>
        </authorList>
    </citation>
    <scope>NUCLEOTIDE SEQUENCE [LARGE SCALE GENOMIC DNA]</scope>
    <source>
        <strain>ATCC MYA-4609 / CBS 101355 / FGSC A1100 / Af293</strain>
    </source>
</reference>
<comment type="catalytic activity">
    <reaction>
        <text>3-(4-hydroxyphenyl)pyruvate + O2 = homogentisate + CO2</text>
        <dbReference type="Rhea" id="RHEA:16189"/>
        <dbReference type="ChEBI" id="CHEBI:15379"/>
        <dbReference type="ChEBI" id="CHEBI:16169"/>
        <dbReference type="ChEBI" id="CHEBI:16526"/>
        <dbReference type="ChEBI" id="CHEBI:36242"/>
        <dbReference type="EC" id="1.13.11.27"/>
    </reaction>
</comment>
<comment type="cofactor">
    <cofactor evidence="1">
        <name>Fe cation</name>
        <dbReference type="ChEBI" id="CHEBI:24875"/>
    </cofactor>
    <text evidence="1">Binds 1 Fe cation per subunit.</text>
</comment>
<comment type="pathway">
    <text>Amino-acid degradation; L-phenylalanine degradation; acetoacetate and fumarate from L-phenylalanine: step 3/6.</text>
</comment>
<comment type="similarity">
    <text evidence="3">Belongs to the 4HPPD family.</text>
</comment>
<gene>
    <name type="ORF">AFUA_4G10620</name>
</gene>